<keyword id="KW-0945">Host-virus interaction</keyword>
<keyword id="KW-1090">Inhibition of host innate immune response by virus</keyword>
<keyword id="KW-0899">Viral immunoevasion</keyword>
<protein>
    <recommendedName>
        <fullName evidence="2">Hachiman anti-defense 1</fullName>
        <shortName evidence="2">Had1</shortName>
    </recommendedName>
</protein>
<dbReference type="EMBL" id="OM982671">
    <property type="protein sequence ID" value="UPI12729.1"/>
    <property type="molecule type" value="Genomic_DNA"/>
</dbReference>
<dbReference type="Proteomes" id="UP000831833">
    <property type="component" value="Segment"/>
</dbReference>
<dbReference type="GO" id="GO:0052170">
    <property type="term" value="P:symbiont-mediated suppression of host innate immune response"/>
    <property type="evidence" value="ECO:0007669"/>
    <property type="project" value="UniProtKB-KW"/>
</dbReference>
<gene>
    <name type="ORF">243</name>
</gene>
<accession>P0DTO0</accession>
<accession>A0AAE9H4A1</accession>
<evidence type="ECO:0000269" key="1">
    <source>
    </source>
</evidence>
<evidence type="ECO:0000303" key="2">
    <source>
    </source>
</evidence>
<evidence type="ECO:0000305" key="3">
    <source>
    </source>
</evidence>
<comment type="function">
    <text evidence="1">Counteracts the host Hachiman antiviral defense system.</text>
</comment>
<comment type="subunit">
    <text evidence="3">Homodimer.</text>
</comment>
<comment type="disruption phenotype">
    <text evidence="1">Knockout of this gene prevents the phage to overcome the host Hachiman defense.</text>
</comment>
<feature type="chain" id="PRO_0000460358" description="Hachiman anti-defense 1">
    <location>
        <begin position="1"/>
        <end position="53"/>
    </location>
</feature>
<feature type="mutagenesis site" description="Complete loss of inhibition of Hachiman host defense." evidence="1">
    <original>I</original>
    <variation>A</variation>
    <variation>D</variation>
    <variation>G</variation>
    <location>
        <position position="41"/>
    </location>
</feature>
<sequence length="53" mass="6229">MEEFKMTVWTNGKAIRKYTGQDKHPDTNPSKRMEWFKATAIIKPDTGDNNERD</sequence>
<reference key="1">
    <citation type="journal article" date="2024" name="Nature">
        <title>Phages overcome bacterial immunity via diverse anti-defence proteins.</title>
        <authorList>
            <person name="Yirmiya E."/>
            <person name="Leavitt A."/>
            <person name="Lu A."/>
            <person name="Ragucci A.E."/>
            <person name="Avraham C."/>
            <person name="Osterman I."/>
            <person name="Garb J."/>
            <person name="Antine S.P."/>
            <person name="Mooney S.E."/>
            <person name="Hobbs S.J."/>
            <person name="Kranzusch P.J."/>
            <person name="Amitai G."/>
            <person name="Sorek R."/>
        </authorList>
    </citation>
    <scope>NUCLEOTIDE SEQUENCE [LARGE SCALE GENOMIC DNA]</scope>
    <scope>FUNCTION</scope>
    <scope>DISRUPTION PHENOTYPE</scope>
    <scope>SUBUNIT</scope>
    <scope>MUTAGENESIS OF ILE-41</scope>
</reference>
<organism>
    <name type="scientific">Bacillus phage SBSphiJ4</name>
    <dbReference type="NCBI Taxonomy" id="2930341"/>
    <lineage>
        <taxon>Viruses</taxon>
        <taxon>Duplodnaviria</taxon>
        <taxon>Heunggongvirae</taxon>
        <taxon>Uroviricota</taxon>
        <taxon>Caudoviricetes</taxon>
        <taxon>Herelleviridae</taxon>
        <taxon>Bastillevirinae</taxon>
        <taxon>Nitunavirus</taxon>
    </lineage>
</organism>
<proteinExistence type="evidence at protein level"/>
<name>HAD1_BPPS7</name>